<feature type="signal peptide" evidence="1">
    <location>
        <begin position="1"/>
        <end position="33"/>
    </location>
</feature>
<feature type="chain" id="PRO_0000353919" description="Membrane-bound lytic murein transglycosylase F">
    <location>
        <begin position="34"/>
        <end position="467"/>
    </location>
</feature>
<feature type="region of interest" description="Non-LT domain" evidence="1">
    <location>
        <begin position="34"/>
        <end position="266"/>
    </location>
</feature>
<feature type="region of interest" description="LT domain" evidence="1">
    <location>
        <begin position="268"/>
        <end position="467"/>
    </location>
</feature>
<feature type="active site" evidence="1">
    <location>
        <position position="313"/>
    </location>
</feature>
<accession>Q0VRG6</accession>
<sequence length="467" mass="52818">MTELFRHSKHLLASLALLSVLGLMLAMHPSPSAIERIMARGELVVLTRPSNTTYYEDQHGFTGMEYELAKGFADSQGVELRILESDDLSYIRYAIRKGTADIVAAGLIATPERSKSLRFSTAYQNVDVLLVRRLTSHRITDLSQLNQQTIAVSAGSSHAELLLKAQLESPELEFQEVENATPEQLLALVEDGQVDYTLINSNSYTLQRALWPDLVADYTVARDMPLSWAFNPKDDKSLYQEAQRYLTQAKADGTTAKLEDRFYGHVEQFNLYAARSFMRHLDDRLPLYEDLFKQAEEDSGFDWRLLAALAYQESLWDPQAISPTGVKGLMMLTNNTARQMGISDRTDPSQSIRAGAGYLRRTHARIPDRIPEPSRTWMALAAYNVGYGHLEDARVLTQRQGGNPDNWQDVKQRLPLLAKPAYADQLRYGTAPGGQAVAYVRHIRRYYDLLVWAENSRRRDDTLIALN</sequence>
<organism>
    <name type="scientific">Alcanivorax borkumensis (strain ATCC 700651 / DSM 11573 / NCIMB 13689 / SK2)</name>
    <dbReference type="NCBI Taxonomy" id="393595"/>
    <lineage>
        <taxon>Bacteria</taxon>
        <taxon>Pseudomonadati</taxon>
        <taxon>Pseudomonadota</taxon>
        <taxon>Gammaproteobacteria</taxon>
        <taxon>Oceanospirillales</taxon>
        <taxon>Alcanivoracaceae</taxon>
        <taxon>Alcanivorax</taxon>
    </lineage>
</organism>
<gene>
    <name evidence="1" type="primary">mltF</name>
    <name type="ordered locus">ABO_0784</name>
</gene>
<reference key="1">
    <citation type="journal article" date="2006" name="Nat. Biotechnol.">
        <title>Genome sequence of the ubiquitous hydrocarbon-degrading marine bacterium Alcanivorax borkumensis.</title>
        <authorList>
            <person name="Schneiker S."/>
            <person name="Martins dos Santos V.A.P."/>
            <person name="Bartels D."/>
            <person name="Bekel T."/>
            <person name="Brecht M."/>
            <person name="Buhrmester J."/>
            <person name="Chernikova T.N."/>
            <person name="Denaro R."/>
            <person name="Ferrer M."/>
            <person name="Gertler C."/>
            <person name="Goesmann A."/>
            <person name="Golyshina O.V."/>
            <person name="Kaminski F."/>
            <person name="Khachane A.N."/>
            <person name="Lang S."/>
            <person name="Linke B."/>
            <person name="McHardy A.C."/>
            <person name="Meyer F."/>
            <person name="Nechitaylo T."/>
            <person name="Puehler A."/>
            <person name="Regenhardt D."/>
            <person name="Rupp O."/>
            <person name="Sabirova J.S."/>
            <person name="Selbitschka W."/>
            <person name="Yakimov M.M."/>
            <person name="Timmis K.N."/>
            <person name="Vorhoelter F.-J."/>
            <person name="Weidner S."/>
            <person name="Kaiser O."/>
            <person name="Golyshin P.N."/>
        </authorList>
    </citation>
    <scope>NUCLEOTIDE SEQUENCE [LARGE SCALE GENOMIC DNA]</scope>
    <source>
        <strain>ATCC 700651 / DSM 11573 / NCIMB 13689 / SK2</strain>
    </source>
</reference>
<comment type="function">
    <text evidence="1">Murein-degrading enzyme that degrades murein glycan strands and insoluble, high-molecular weight murein sacculi, with the concomitant formation of a 1,6-anhydromuramoyl product. Lytic transglycosylases (LTs) play an integral role in the metabolism of the peptidoglycan (PG) sacculus. Their lytic action creates space within the PG sacculus to allow for its expansion as well as for the insertion of various structures such as secretion systems and flagella.</text>
</comment>
<comment type="catalytic activity">
    <reaction evidence="1">
        <text>Exolytic cleavage of the (1-&gt;4)-beta-glycosidic linkage between N-acetylmuramic acid (MurNAc) and N-acetylglucosamine (GlcNAc) residues in peptidoglycan, from either the reducing or the non-reducing ends of the peptidoglycan chains, with concomitant formation of a 1,6-anhydrobond in the MurNAc residue.</text>
        <dbReference type="EC" id="4.2.2.n1"/>
    </reaction>
</comment>
<comment type="subcellular location">
    <subcellularLocation>
        <location>Cell outer membrane</location>
        <topology>Peripheral membrane protein</topology>
    </subcellularLocation>
    <text evidence="1">Attached to the inner leaflet of the outer membrane.</text>
</comment>
<comment type="domain">
    <text evidence="1">The N-terminal domain does not have lytic activity and probably modulates enzymatic activity. The C-terminal domain is the catalytic active domain.</text>
</comment>
<comment type="similarity">
    <text evidence="1">In the N-terminal section; belongs to the bacterial solute-binding protein 3 family.</text>
</comment>
<comment type="similarity">
    <text evidence="1">In the C-terminal section; belongs to the transglycosylase Slt family.</text>
</comment>
<protein>
    <recommendedName>
        <fullName evidence="1">Membrane-bound lytic murein transglycosylase F</fullName>
        <ecNumber evidence="1">4.2.2.n1</ecNumber>
    </recommendedName>
    <alternativeName>
        <fullName evidence="1">Murein lyase F</fullName>
    </alternativeName>
</protein>
<keyword id="KW-0998">Cell outer membrane</keyword>
<keyword id="KW-0961">Cell wall biogenesis/degradation</keyword>
<keyword id="KW-0456">Lyase</keyword>
<keyword id="KW-0472">Membrane</keyword>
<keyword id="KW-1185">Reference proteome</keyword>
<keyword id="KW-0732">Signal</keyword>
<proteinExistence type="inferred from homology"/>
<name>MLTF_ALCBS</name>
<dbReference type="EC" id="4.2.2.n1" evidence="1"/>
<dbReference type="EMBL" id="AM286690">
    <property type="protein sequence ID" value="CAL16232.1"/>
    <property type="molecule type" value="Genomic_DNA"/>
</dbReference>
<dbReference type="SMR" id="Q0VRG6"/>
<dbReference type="STRING" id="393595.ABO_0784"/>
<dbReference type="CAZy" id="GH23">
    <property type="family name" value="Glycoside Hydrolase Family 23"/>
</dbReference>
<dbReference type="KEGG" id="abo:ABO_0784"/>
<dbReference type="eggNOG" id="COG4623">
    <property type="taxonomic scope" value="Bacteria"/>
</dbReference>
<dbReference type="HOGENOM" id="CLU_027494_0_1_6"/>
<dbReference type="OrthoDB" id="9815002at2"/>
<dbReference type="Proteomes" id="UP000008871">
    <property type="component" value="Chromosome"/>
</dbReference>
<dbReference type="GO" id="GO:0009279">
    <property type="term" value="C:cell outer membrane"/>
    <property type="evidence" value="ECO:0007669"/>
    <property type="project" value="UniProtKB-SubCell"/>
</dbReference>
<dbReference type="GO" id="GO:0008933">
    <property type="term" value="F:peptidoglycan lytic transglycosylase activity"/>
    <property type="evidence" value="ECO:0007669"/>
    <property type="project" value="UniProtKB-UniRule"/>
</dbReference>
<dbReference type="GO" id="GO:0016998">
    <property type="term" value="P:cell wall macromolecule catabolic process"/>
    <property type="evidence" value="ECO:0007669"/>
    <property type="project" value="UniProtKB-UniRule"/>
</dbReference>
<dbReference type="GO" id="GO:0071555">
    <property type="term" value="P:cell wall organization"/>
    <property type="evidence" value="ECO:0007669"/>
    <property type="project" value="UniProtKB-KW"/>
</dbReference>
<dbReference type="GO" id="GO:0009253">
    <property type="term" value="P:peptidoglycan catabolic process"/>
    <property type="evidence" value="ECO:0007669"/>
    <property type="project" value="TreeGrafter"/>
</dbReference>
<dbReference type="CDD" id="cd13403">
    <property type="entry name" value="MLTF-like"/>
    <property type="match status" value="1"/>
</dbReference>
<dbReference type="CDD" id="cd01009">
    <property type="entry name" value="PBP2_YfhD_N"/>
    <property type="match status" value="1"/>
</dbReference>
<dbReference type="Gene3D" id="1.10.530.10">
    <property type="match status" value="1"/>
</dbReference>
<dbReference type="Gene3D" id="3.40.190.10">
    <property type="entry name" value="Periplasmic binding protein-like II"/>
    <property type="match status" value="2"/>
</dbReference>
<dbReference type="HAMAP" id="MF_02016">
    <property type="entry name" value="MltF"/>
    <property type="match status" value="1"/>
</dbReference>
<dbReference type="InterPro" id="IPR023346">
    <property type="entry name" value="Lysozyme-like_dom_sf"/>
</dbReference>
<dbReference type="InterPro" id="IPR023703">
    <property type="entry name" value="MltF"/>
</dbReference>
<dbReference type="InterPro" id="IPR001638">
    <property type="entry name" value="Solute-binding_3/MltF_N"/>
</dbReference>
<dbReference type="InterPro" id="IPR000189">
    <property type="entry name" value="Transglyc_AS"/>
</dbReference>
<dbReference type="InterPro" id="IPR008258">
    <property type="entry name" value="Transglycosylase_SLT_dom_1"/>
</dbReference>
<dbReference type="NCBIfam" id="NF008112">
    <property type="entry name" value="PRK10859.1"/>
    <property type="match status" value="1"/>
</dbReference>
<dbReference type="PANTHER" id="PTHR35936">
    <property type="entry name" value="MEMBRANE-BOUND LYTIC MUREIN TRANSGLYCOSYLASE F"/>
    <property type="match status" value="1"/>
</dbReference>
<dbReference type="PANTHER" id="PTHR35936:SF32">
    <property type="entry name" value="MEMBRANE-BOUND LYTIC MUREIN TRANSGLYCOSYLASE F"/>
    <property type="match status" value="1"/>
</dbReference>
<dbReference type="Pfam" id="PF00497">
    <property type="entry name" value="SBP_bac_3"/>
    <property type="match status" value="1"/>
</dbReference>
<dbReference type="Pfam" id="PF01464">
    <property type="entry name" value="SLT"/>
    <property type="match status" value="1"/>
</dbReference>
<dbReference type="SMART" id="SM00062">
    <property type="entry name" value="PBPb"/>
    <property type="match status" value="1"/>
</dbReference>
<dbReference type="SUPFAM" id="SSF53955">
    <property type="entry name" value="Lysozyme-like"/>
    <property type="match status" value="1"/>
</dbReference>
<dbReference type="SUPFAM" id="SSF53850">
    <property type="entry name" value="Periplasmic binding protein-like II"/>
    <property type="match status" value="1"/>
</dbReference>
<dbReference type="PROSITE" id="PS00922">
    <property type="entry name" value="TRANSGLYCOSYLASE"/>
    <property type="match status" value="1"/>
</dbReference>
<evidence type="ECO:0000255" key="1">
    <source>
        <dbReference type="HAMAP-Rule" id="MF_02016"/>
    </source>
</evidence>